<name>ATPD_FRATW</name>
<proteinExistence type="inferred from homology"/>
<sequence>MTNISVIAKPYAKAAFEFANEHNLLQQWSKLLQTFSELIKDKSVAAIVSSPTISQIEVVDALKKQLDENFFNFLALIAENKKMLIMPEIADQFESIKNIHNNVRVADVTLAYATDKNILDSLKTSLEKKFGCTIDMHINIDPAIIGGAVVKVGDTVIDSSVSGHLEKLKSILLS</sequence>
<protein>
    <recommendedName>
        <fullName evidence="1">ATP synthase subunit delta</fullName>
    </recommendedName>
    <alternativeName>
        <fullName evidence="1">ATP synthase F(1) sector subunit delta</fullName>
    </alternativeName>
    <alternativeName>
        <fullName evidence="1">F-type ATPase subunit delta</fullName>
        <shortName evidence="1">F-ATPase subunit delta</shortName>
    </alternativeName>
</protein>
<reference key="1">
    <citation type="journal article" date="2007" name="PLoS ONE">
        <title>Complete genomic characterization of a pathogenic A.II strain of Francisella tularensis subspecies tularensis.</title>
        <authorList>
            <person name="Beckstrom-Sternberg S.M."/>
            <person name="Auerbach R.K."/>
            <person name="Godbole S."/>
            <person name="Pearson J.V."/>
            <person name="Beckstrom-Sternberg J.S."/>
            <person name="Deng Z."/>
            <person name="Munk C."/>
            <person name="Kubota K."/>
            <person name="Zhou Y."/>
            <person name="Bruce D."/>
            <person name="Noronha J."/>
            <person name="Scheuermann R.H."/>
            <person name="Wang A."/>
            <person name="Wei X."/>
            <person name="Wang J."/>
            <person name="Hao J."/>
            <person name="Wagner D.M."/>
            <person name="Brettin T.S."/>
            <person name="Brown N."/>
            <person name="Gilna P."/>
            <person name="Keim P.S."/>
        </authorList>
    </citation>
    <scope>NUCLEOTIDE SEQUENCE [LARGE SCALE GENOMIC DNA]</scope>
    <source>
        <strain>WY96-3418</strain>
    </source>
</reference>
<gene>
    <name evidence="1" type="primary">atpH</name>
    <name type="ordered locus">FTW_0137</name>
</gene>
<evidence type="ECO:0000255" key="1">
    <source>
        <dbReference type="HAMAP-Rule" id="MF_01416"/>
    </source>
</evidence>
<dbReference type="EMBL" id="CP000608">
    <property type="protein sequence ID" value="ABO46123.1"/>
    <property type="molecule type" value="Genomic_DNA"/>
</dbReference>
<dbReference type="RefSeq" id="WP_003017341.1">
    <property type="nucleotide sequence ID" value="NC_009257.1"/>
</dbReference>
<dbReference type="SMR" id="A4IW21"/>
<dbReference type="KEGG" id="ftw:FTW_0137"/>
<dbReference type="HOGENOM" id="CLU_085114_3_0_6"/>
<dbReference type="GO" id="GO:0005886">
    <property type="term" value="C:plasma membrane"/>
    <property type="evidence" value="ECO:0007669"/>
    <property type="project" value="UniProtKB-SubCell"/>
</dbReference>
<dbReference type="GO" id="GO:0045259">
    <property type="term" value="C:proton-transporting ATP synthase complex"/>
    <property type="evidence" value="ECO:0007669"/>
    <property type="project" value="UniProtKB-KW"/>
</dbReference>
<dbReference type="GO" id="GO:0046933">
    <property type="term" value="F:proton-transporting ATP synthase activity, rotational mechanism"/>
    <property type="evidence" value="ECO:0007669"/>
    <property type="project" value="UniProtKB-UniRule"/>
</dbReference>
<dbReference type="Gene3D" id="1.10.520.20">
    <property type="entry name" value="N-terminal domain of the delta subunit of the F1F0-ATP synthase"/>
    <property type="match status" value="1"/>
</dbReference>
<dbReference type="HAMAP" id="MF_01416">
    <property type="entry name" value="ATP_synth_delta_bact"/>
    <property type="match status" value="1"/>
</dbReference>
<dbReference type="InterPro" id="IPR026015">
    <property type="entry name" value="ATP_synth_OSCP/delta_N_sf"/>
</dbReference>
<dbReference type="InterPro" id="IPR020781">
    <property type="entry name" value="ATPase_OSCP/d_CS"/>
</dbReference>
<dbReference type="InterPro" id="IPR000711">
    <property type="entry name" value="ATPase_OSCP/dsu"/>
</dbReference>
<dbReference type="NCBIfam" id="TIGR01145">
    <property type="entry name" value="ATP_synt_delta"/>
    <property type="match status" value="1"/>
</dbReference>
<dbReference type="NCBIfam" id="NF004402">
    <property type="entry name" value="PRK05758.2-2"/>
    <property type="match status" value="1"/>
</dbReference>
<dbReference type="PANTHER" id="PTHR11910">
    <property type="entry name" value="ATP SYNTHASE DELTA CHAIN"/>
    <property type="match status" value="1"/>
</dbReference>
<dbReference type="Pfam" id="PF00213">
    <property type="entry name" value="OSCP"/>
    <property type="match status" value="1"/>
</dbReference>
<dbReference type="PRINTS" id="PR00125">
    <property type="entry name" value="ATPASEDELTA"/>
</dbReference>
<dbReference type="SUPFAM" id="SSF47928">
    <property type="entry name" value="N-terminal domain of the delta subunit of the F1F0-ATP synthase"/>
    <property type="match status" value="1"/>
</dbReference>
<dbReference type="PROSITE" id="PS00389">
    <property type="entry name" value="ATPASE_DELTA"/>
    <property type="match status" value="1"/>
</dbReference>
<keyword id="KW-0066">ATP synthesis</keyword>
<keyword id="KW-0997">Cell inner membrane</keyword>
<keyword id="KW-1003">Cell membrane</keyword>
<keyword id="KW-0139">CF(1)</keyword>
<keyword id="KW-0375">Hydrogen ion transport</keyword>
<keyword id="KW-0406">Ion transport</keyword>
<keyword id="KW-0472">Membrane</keyword>
<keyword id="KW-0813">Transport</keyword>
<accession>A4IW21</accession>
<organism>
    <name type="scientific">Francisella tularensis subsp. tularensis (strain WY96-3418)</name>
    <dbReference type="NCBI Taxonomy" id="418136"/>
    <lineage>
        <taxon>Bacteria</taxon>
        <taxon>Pseudomonadati</taxon>
        <taxon>Pseudomonadota</taxon>
        <taxon>Gammaproteobacteria</taxon>
        <taxon>Thiotrichales</taxon>
        <taxon>Francisellaceae</taxon>
        <taxon>Francisella</taxon>
    </lineage>
</organism>
<comment type="function">
    <text evidence="1">F(1)F(0) ATP synthase produces ATP from ADP in the presence of a proton or sodium gradient. F-type ATPases consist of two structural domains, F(1) containing the extramembraneous catalytic core and F(0) containing the membrane proton channel, linked together by a central stalk and a peripheral stalk. During catalysis, ATP synthesis in the catalytic domain of F(1) is coupled via a rotary mechanism of the central stalk subunits to proton translocation.</text>
</comment>
<comment type="function">
    <text evidence="1">This protein is part of the stalk that links CF(0) to CF(1). It either transmits conformational changes from CF(0) to CF(1) or is implicated in proton conduction.</text>
</comment>
<comment type="subunit">
    <text evidence="1">F-type ATPases have 2 components, F(1) - the catalytic core - and F(0) - the membrane proton channel. F(1) has five subunits: alpha(3), beta(3), gamma(1), delta(1), epsilon(1). F(0) has three main subunits: a(1), b(2) and c(10-14). The alpha and beta chains form an alternating ring which encloses part of the gamma chain. F(1) is attached to F(0) by a central stalk formed by the gamma and epsilon chains, while a peripheral stalk is formed by the delta and b chains.</text>
</comment>
<comment type="subcellular location">
    <subcellularLocation>
        <location evidence="1">Cell inner membrane</location>
        <topology evidence="1">Peripheral membrane protein</topology>
    </subcellularLocation>
</comment>
<comment type="similarity">
    <text evidence="1">Belongs to the ATPase delta chain family.</text>
</comment>
<feature type="chain" id="PRO_1000184720" description="ATP synthase subunit delta">
    <location>
        <begin position="1"/>
        <end position="174"/>
    </location>
</feature>